<accession>Q8F6P1</accession>
<protein>
    <recommendedName>
        <fullName evidence="1">ATP phosphoribosyltransferase</fullName>
        <shortName evidence="1">ATP-PRT</shortName>
        <shortName evidence="1">ATP-PRTase</shortName>
        <ecNumber evidence="1">2.4.2.17</ecNumber>
    </recommendedName>
</protein>
<feature type="chain" id="PRO_0000151914" description="ATP phosphoribosyltransferase">
    <location>
        <begin position="1"/>
        <end position="205"/>
    </location>
</feature>
<evidence type="ECO:0000255" key="1">
    <source>
        <dbReference type="HAMAP-Rule" id="MF_01018"/>
    </source>
</evidence>
<proteinExistence type="inferred from homology"/>
<organism>
    <name type="scientific">Leptospira interrogans serogroup Icterohaemorrhagiae serovar Lai (strain 56601)</name>
    <dbReference type="NCBI Taxonomy" id="189518"/>
    <lineage>
        <taxon>Bacteria</taxon>
        <taxon>Pseudomonadati</taxon>
        <taxon>Spirochaetota</taxon>
        <taxon>Spirochaetia</taxon>
        <taxon>Leptospirales</taxon>
        <taxon>Leptospiraceae</taxon>
        <taxon>Leptospira</taxon>
    </lineage>
</organism>
<keyword id="KW-0028">Amino-acid biosynthesis</keyword>
<keyword id="KW-0067">ATP-binding</keyword>
<keyword id="KW-0963">Cytoplasm</keyword>
<keyword id="KW-0328">Glycosyltransferase</keyword>
<keyword id="KW-0368">Histidine biosynthesis</keyword>
<keyword id="KW-0547">Nucleotide-binding</keyword>
<keyword id="KW-1185">Reference proteome</keyword>
<keyword id="KW-0808">Transferase</keyword>
<name>HIS1_LEPIN</name>
<reference key="1">
    <citation type="journal article" date="2003" name="Nature">
        <title>Unique physiological and pathogenic features of Leptospira interrogans revealed by whole-genome sequencing.</title>
        <authorList>
            <person name="Ren S.-X."/>
            <person name="Fu G."/>
            <person name="Jiang X.-G."/>
            <person name="Zeng R."/>
            <person name="Miao Y.-G."/>
            <person name="Xu H."/>
            <person name="Zhang Y.-X."/>
            <person name="Xiong H."/>
            <person name="Lu G."/>
            <person name="Lu L.-F."/>
            <person name="Jiang H.-Q."/>
            <person name="Jia J."/>
            <person name="Tu Y.-F."/>
            <person name="Jiang J.-X."/>
            <person name="Gu W.-Y."/>
            <person name="Zhang Y.-Q."/>
            <person name="Cai Z."/>
            <person name="Sheng H.-H."/>
            <person name="Yin H.-F."/>
            <person name="Zhang Y."/>
            <person name="Zhu G.-F."/>
            <person name="Wan M."/>
            <person name="Huang H.-L."/>
            <person name="Qian Z."/>
            <person name="Wang S.-Y."/>
            <person name="Ma W."/>
            <person name="Yao Z.-J."/>
            <person name="Shen Y."/>
            <person name="Qiang B.-Q."/>
            <person name="Xia Q.-C."/>
            <person name="Guo X.-K."/>
            <person name="Danchin A."/>
            <person name="Saint Girons I."/>
            <person name="Somerville R.L."/>
            <person name="Wen Y.-M."/>
            <person name="Shi M.-H."/>
            <person name="Chen Z."/>
            <person name="Xu J.-G."/>
            <person name="Zhao G.-P."/>
        </authorList>
    </citation>
    <scope>NUCLEOTIDE SEQUENCE [LARGE SCALE GENOMIC DNA]</scope>
    <source>
        <strain>56601</strain>
    </source>
</reference>
<gene>
    <name evidence="1" type="primary">hisG</name>
    <name type="ordered locus">LA_1262</name>
</gene>
<sequence>MLTLALPKGRLAEESIDLMISKGWLSSKPDPNSKELIYNDPKGKIRILLVRSQDVATYVEQCAADAGISGWDVLKEGGYDLATPLDLKIGKCRLSLAAPNGFTLEAHHRKIRVATKYPNLAREFFFLKGLSCEIFKLYGSIELAPLVGLSDCIVDLVSTGGTLKANGLKELDIILESSARLVFNRSSLYGKRKEAVEFMDSLSKI</sequence>
<comment type="function">
    <text evidence="1">Catalyzes the condensation of ATP and 5-phosphoribose 1-diphosphate to form N'-(5'-phosphoribosyl)-ATP (PR-ATP). Has a crucial role in the pathway because the rate of histidine biosynthesis seems to be controlled primarily by regulation of HisG enzymatic activity.</text>
</comment>
<comment type="catalytic activity">
    <reaction evidence="1">
        <text>1-(5-phospho-beta-D-ribosyl)-ATP + diphosphate = 5-phospho-alpha-D-ribose 1-diphosphate + ATP</text>
        <dbReference type="Rhea" id="RHEA:18473"/>
        <dbReference type="ChEBI" id="CHEBI:30616"/>
        <dbReference type="ChEBI" id="CHEBI:33019"/>
        <dbReference type="ChEBI" id="CHEBI:58017"/>
        <dbReference type="ChEBI" id="CHEBI:73183"/>
        <dbReference type="EC" id="2.4.2.17"/>
    </reaction>
</comment>
<comment type="pathway">
    <text evidence="1">Amino-acid biosynthesis; L-histidine biosynthesis; L-histidine from 5-phospho-alpha-D-ribose 1-diphosphate: step 1/9.</text>
</comment>
<comment type="subunit">
    <text evidence="1">Heteromultimer composed of HisG and HisZ subunits.</text>
</comment>
<comment type="subcellular location">
    <subcellularLocation>
        <location evidence="1">Cytoplasm</location>
    </subcellularLocation>
</comment>
<comment type="domain">
    <text>Lacks the C-terminal regulatory region which is replaced by HisZ.</text>
</comment>
<comment type="similarity">
    <text evidence="1">Belongs to the ATP phosphoribosyltransferase family. Short subfamily.</text>
</comment>
<dbReference type="EC" id="2.4.2.17" evidence="1"/>
<dbReference type="EMBL" id="AE010300">
    <property type="protein sequence ID" value="AAN48461.2"/>
    <property type="molecule type" value="Genomic_DNA"/>
</dbReference>
<dbReference type="RefSeq" id="NP_711443.2">
    <property type="nucleotide sequence ID" value="NC_004342.2"/>
</dbReference>
<dbReference type="RefSeq" id="WP_000956489.1">
    <property type="nucleotide sequence ID" value="NC_004342.2"/>
</dbReference>
<dbReference type="SMR" id="Q8F6P1"/>
<dbReference type="FunCoup" id="Q8F6P1">
    <property type="interactions" value="422"/>
</dbReference>
<dbReference type="STRING" id="189518.LA_1262"/>
<dbReference type="PaxDb" id="189518-LA_1262"/>
<dbReference type="EnsemblBacteria" id="AAN48461">
    <property type="protein sequence ID" value="AAN48461"/>
    <property type="gene ID" value="LA_1262"/>
</dbReference>
<dbReference type="GeneID" id="61142322"/>
<dbReference type="KEGG" id="lil:LA_1262"/>
<dbReference type="PATRIC" id="fig|189518.3.peg.1263"/>
<dbReference type="HOGENOM" id="CLU_038115_2_0_12"/>
<dbReference type="InParanoid" id="Q8F6P1"/>
<dbReference type="OrthoDB" id="9801867at2"/>
<dbReference type="UniPathway" id="UPA00031">
    <property type="reaction ID" value="UER00006"/>
</dbReference>
<dbReference type="Proteomes" id="UP000001408">
    <property type="component" value="Chromosome I"/>
</dbReference>
<dbReference type="GO" id="GO:0005737">
    <property type="term" value="C:cytoplasm"/>
    <property type="evidence" value="ECO:0007669"/>
    <property type="project" value="UniProtKB-SubCell"/>
</dbReference>
<dbReference type="GO" id="GO:0005524">
    <property type="term" value="F:ATP binding"/>
    <property type="evidence" value="ECO:0007669"/>
    <property type="project" value="UniProtKB-KW"/>
</dbReference>
<dbReference type="GO" id="GO:0003879">
    <property type="term" value="F:ATP phosphoribosyltransferase activity"/>
    <property type="evidence" value="ECO:0000318"/>
    <property type="project" value="GO_Central"/>
</dbReference>
<dbReference type="GO" id="GO:0000105">
    <property type="term" value="P:L-histidine biosynthetic process"/>
    <property type="evidence" value="ECO:0000318"/>
    <property type="project" value="GO_Central"/>
</dbReference>
<dbReference type="CDD" id="cd13595">
    <property type="entry name" value="PBP2_HisGs"/>
    <property type="match status" value="1"/>
</dbReference>
<dbReference type="FunFam" id="3.40.190.10:FF:000008">
    <property type="entry name" value="ATP phosphoribosyltransferase"/>
    <property type="match status" value="1"/>
</dbReference>
<dbReference type="Gene3D" id="3.40.190.10">
    <property type="entry name" value="Periplasmic binding protein-like II"/>
    <property type="match status" value="2"/>
</dbReference>
<dbReference type="HAMAP" id="MF_01018">
    <property type="entry name" value="HisG_Short"/>
    <property type="match status" value="1"/>
</dbReference>
<dbReference type="InterPro" id="IPR013820">
    <property type="entry name" value="ATP_PRibTrfase_cat"/>
</dbReference>
<dbReference type="InterPro" id="IPR018198">
    <property type="entry name" value="ATP_PRibTrfase_CS"/>
</dbReference>
<dbReference type="InterPro" id="IPR001348">
    <property type="entry name" value="ATP_PRibTrfase_HisG"/>
</dbReference>
<dbReference type="InterPro" id="IPR024893">
    <property type="entry name" value="ATP_PRibTrfase_HisG_short"/>
</dbReference>
<dbReference type="NCBIfam" id="TIGR00070">
    <property type="entry name" value="hisG"/>
    <property type="match status" value="1"/>
</dbReference>
<dbReference type="PANTHER" id="PTHR21403:SF8">
    <property type="entry name" value="ATP PHOSPHORIBOSYLTRANSFERASE"/>
    <property type="match status" value="1"/>
</dbReference>
<dbReference type="PANTHER" id="PTHR21403">
    <property type="entry name" value="ATP PHOSPHORIBOSYLTRANSFERASE ATP-PRTASE"/>
    <property type="match status" value="1"/>
</dbReference>
<dbReference type="Pfam" id="PF01634">
    <property type="entry name" value="HisG"/>
    <property type="match status" value="1"/>
</dbReference>
<dbReference type="SUPFAM" id="SSF53850">
    <property type="entry name" value="Periplasmic binding protein-like II"/>
    <property type="match status" value="1"/>
</dbReference>
<dbReference type="PROSITE" id="PS01316">
    <property type="entry name" value="ATP_P_PHORIBOSYLTR"/>
    <property type="match status" value="1"/>
</dbReference>